<gene>
    <name type="primary">rpt-1</name>
    <name type="ORF">C52E4.4</name>
</gene>
<evidence type="ECO:0000250" key="1"/>
<evidence type="ECO:0000255" key="2"/>
<evidence type="ECO:0000256" key="3">
    <source>
        <dbReference type="SAM" id="MobiDB-lite"/>
    </source>
</evidence>
<evidence type="ECO:0000305" key="4"/>
<accession>Q18787</accession>
<organism>
    <name type="scientific">Caenorhabditis elegans</name>
    <dbReference type="NCBI Taxonomy" id="6239"/>
    <lineage>
        <taxon>Eukaryota</taxon>
        <taxon>Metazoa</taxon>
        <taxon>Ecdysozoa</taxon>
        <taxon>Nematoda</taxon>
        <taxon>Chromadorea</taxon>
        <taxon>Rhabditida</taxon>
        <taxon>Rhabditina</taxon>
        <taxon>Rhabditomorpha</taxon>
        <taxon>Rhabditoidea</taxon>
        <taxon>Rhabditidae</taxon>
        <taxon>Peloderinae</taxon>
        <taxon>Caenorhabditis</taxon>
    </lineage>
</organism>
<keyword id="KW-0067">ATP-binding</keyword>
<keyword id="KW-0963">Cytoplasm</keyword>
<keyword id="KW-0547">Nucleotide-binding</keyword>
<keyword id="KW-0539">Nucleus</keyword>
<keyword id="KW-0647">Proteasome</keyword>
<keyword id="KW-1185">Reference proteome</keyword>
<sequence length="435" mass="48611">MPDHLGDDMRKTKKDDTKEEEKNFQALDEGDIAVLKRYGQGPYAEQLKTLDADIENCLKKVNELSGVKESDTGLAPPALWDIAADKQAMQQEQPLQVARCTKIITSDKHDPRYLINVKQFAKFVVDLADSVAPTDIEEGMRVGVDRNKYQIHLPLPAKIDPTVTMMQVEEKPDVTYSDVGGCKDQIEKLREVVETPLLHPERYVNLGIEPPKGVLLYGPPGTGKTLCARAVANRTDACFIRVIGSELVQKYVGEGARMVRELFEMARTKKACLIFFDEIDAVGGARFDDGQGGDNEVQRTMLELINQLDGFDPRGNIKVLMATNRPDTLDPALMRPGRLDRKVEFALPDLAGRAHILKIHAKQMSVERDIRYDLLARLCPNSTGAEIRSVCTEAGMFAIRARRKVATEKDFLEAINKVVKGYAKFSATPRYLTHN</sequence>
<comment type="function">
    <text evidence="1">The 26S proteasome is involved in the ATP-dependent degradation of ubiquitinated proteins. The regulatory (or ATPase) complex confers ATP dependency and substrate specificity to the 26S complex (By similarity).</text>
</comment>
<comment type="interaction">
    <interactant intactId="EBI-318033">
        <id>Q18787</id>
    </interactant>
    <interactant intactId="EBI-318041">
        <id>Q20058</id>
        <label>CELE_F35G12.12</label>
    </interactant>
    <organismsDiffer>false</organismsDiffer>
    <experiments>6</experiments>
</comment>
<comment type="subcellular location">
    <subcellularLocation>
        <location evidence="4">Cytoplasm</location>
    </subcellularLocation>
    <subcellularLocation>
        <location evidence="4">Nucleus</location>
    </subcellularLocation>
</comment>
<comment type="similarity">
    <text evidence="4">Belongs to the AAA ATPase family.</text>
</comment>
<feature type="chain" id="PRO_0000084713" description="26S proteasome regulatory subunit 7">
    <location>
        <begin position="1"/>
        <end position="435"/>
    </location>
</feature>
<feature type="region of interest" description="Disordered" evidence="3">
    <location>
        <begin position="1"/>
        <end position="24"/>
    </location>
</feature>
<feature type="compositionally biased region" description="Basic and acidic residues" evidence="3">
    <location>
        <begin position="1"/>
        <end position="23"/>
    </location>
</feature>
<feature type="binding site" evidence="2">
    <location>
        <begin position="218"/>
        <end position="225"/>
    </location>
    <ligand>
        <name>ATP</name>
        <dbReference type="ChEBI" id="CHEBI:30616"/>
    </ligand>
</feature>
<name>PRS7_CAEEL</name>
<reference key="1">
    <citation type="journal article" date="1998" name="Science">
        <title>Genome sequence of the nematode C. elegans: a platform for investigating biology.</title>
        <authorList>
            <consortium name="The C. elegans sequencing consortium"/>
        </authorList>
    </citation>
    <scope>NUCLEOTIDE SEQUENCE [LARGE SCALE GENOMIC DNA]</scope>
    <source>
        <strain>Bristol N2</strain>
    </source>
</reference>
<protein>
    <recommendedName>
        <fullName>26S proteasome regulatory subunit 7</fullName>
    </recommendedName>
    <alternativeName>
        <fullName>26S proteasome AAA-ATPase subunit rpt-1</fullName>
    </alternativeName>
    <alternativeName>
        <fullName>Proteasome 26S subunit ATPase 2</fullName>
    </alternativeName>
</protein>
<dbReference type="EMBL" id="Z78012">
    <property type="protein sequence ID" value="CAB01414.1"/>
    <property type="molecule type" value="Genomic_DNA"/>
</dbReference>
<dbReference type="PIR" id="T20152">
    <property type="entry name" value="T20152"/>
</dbReference>
<dbReference type="RefSeq" id="NP_506005.1">
    <property type="nucleotide sequence ID" value="NM_073604.8"/>
</dbReference>
<dbReference type="SMR" id="Q18787"/>
<dbReference type="BioGRID" id="44665">
    <property type="interactions" value="45"/>
</dbReference>
<dbReference type="FunCoup" id="Q18787">
    <property type="interactions" value="2852"/>
</dbReference>
<dbReference type="IntAct" id="Q18787">
    <property type="interactions" value="2"/>
</dbReference>
<dbReference type="STRING" id="6239.C52E4.4.2"/>
<dbReference type="PaxDb" id="6239-C52E4.4.1"/>
<dbReference type="PeptideAtlas" id="Q18787"/>
<dbReference type="EnsemblMetazoa" id="C52E4.4.1">
    <property type="protein sequence ID" value="C52E4.4.1"/>
    <property type="gene ID" value="WBGene00004501"/>
</dbReference>
<dbReference type="GeneID" id="179641"/>
<dbReference type="KEGG" id="cel:CELE_C52E4.4"/>
<dbReference type="UCSC" id="C52E4.4.1">
    <property type="organism name" value="c. elegans"/>
</dbReference>
<dbReference type="AGR" id="WB:WBGene00004501"/>
<dbReference type="CTD" id="179641"/>
<dbReference type="WormBase" id="C52E4.4">
    <property type="protein sequence ID" value="CE08946"/>
    <property type="gene ID" value="WBGene00004501"/>
    <property type="gene designation" value="rpt-1"/>
</dbReference>
<dbReference type="eggNOG" id="KOG0729">
    <property type="taxonomic scope" value="Eukaryota"/>
</dbReference>
<dbReference type="GeneTree" id="ENSGT01020000230346"/>
<dbReference type="HOGENOM" id="CLU_000688_6_1_1"/>
<dbReference type="InParanoid" id="Q18787"/>
<dbReference type="OMA" id="RSKYHIE"/>
<dbReference type="OrthoDB" id="1664597at2759"/>
<dbReference type="PhylomeDB" id="Q18787"/>
<dbReference type="Reactome" id="R-CEL-1234176">
    <property type="pathway name" value="Oxygen-dependent proline hydroxylation of Hypoxia-inducible Factor Alpha"/>
</dbReference>
<dbReference type="Reactome" id="R-CEL-1236978">
    <property type="pathway name" value="Cross-presentation of soluble exogenous antigens (endosomes)"/>
</dbReference>
<dbReference type="Reactome" id="R-CEL-187577">
    <property type="pathway name" value="SCF(Skp2)-mediated degradation of p27/p21"/>
</dbReference>
<dbReference type="Reactome" id="R-CEL-195253">
    <property type="pathway name" value="Degradation of beta-catenin by the destruction complex"/>
</dbReference>
<dbReference type="Reactome" id="R-CEL-349425">
    <property type="pathway name" value="Autodegradation of the E3 ubiquitin ligase COP1"/>
</dbReference>
<dbReference type="Reactome" id="R-CEL-350562">
    <property type="pathway name" value="Regulation of ornithine decarboxylase (ODC)"/>
</dbReference>
<dbReference type="Reactome" id="R-CEL-382556">
    <property type="pathway name" value="ABC-family proteins mediated transport"/>
</dbReference>
<dbReference type="Reactome" id="R-CEL-4608870">
    <property type="pathway name" value="Asymmetric localization of PCP proteins"/>
</dbReference>
<dbReference type="Reactome" id="R-CEL-4641258">
    <property type="pathway name" value="Degradation of DVL"/>
</dbReference>
<dbReference type="Reactome" id="R-CEL-5632684">
    <property type="pathway name" value="Hedgehog 'on' state"/>
</dbReference>
<dbReference type="Reactome" id="R-CEL-5687128">
    <property type="pathway name" value="MAPK6/MAPK4 signaling"/>
</dbReference>
<dbReference type="Reactome" id="R-CEL-5689603">
    <property type="pathway name" value="UCH proteinases"/>
</dbReference>
<dbReference type="Reactome" id="R-CEL-5689880">
    <property type="pathway name" value="Ub-specific processing proteases"/>
</dbReference>
<dbReference type="Reactome" id="R-CEL-6798695">
    <property type="pathway name" value="Neutrophil degranulation"/>
</dbReference>
<dbReference type="Reactome" id="R-CEL-68949">
    <property type="pathway name" value="Orc1 removal from chromatin"/>
</dbReference>
<dbReference type="Reactome" id="R-CEL-69017">
    <property type="pathway name" value="CDK-mediated phosphorylation and removal of Cdc6"/>
</dbReference>
<dbReference type="Reactome" id="R-CEL-69601">
    <property type="pathway name" value="Ubiquitin Mediated Degradation of Phosphorylated Cdc25A"/>
</dbReference>
<dbReference type="Reactome" id="R-CEL-75815">
    <property type="pathway name" value="Ubiquitin-dependent degradation of Cyclin D"/>
</dbReference>
<dbReference type="Reactome" id="R-CEL-8854050">
    <property type="pathway name" value="FBXL7 down-regulates AURKA during mitotic entry and in early mitosis"/>
</dbReference>
<dbReference type="Reactome" id="R-CEL-8939902">
    <property type="pathway name" value="Regulation of RUNX2 expression and activity"/>
</dbReference>
<dbReference type="Reactome" id="R-CEL-8941858">
    <property type="pathway name" value="Regulation of RUNX3 expression and activity"/>
</dbReference>
<dbReference type="Reactome" id="R-CEL-8948751">
    <property type="pathway name" value="Regulation of PTEN stability and activity"/>
</dbReference>
<dbReference type="Reactome" id="R-CEL-8951664">
    <property type="pathway name" value="Neddylation"/>
</dbReference>
<dbReference type="Reactome" id="R-CEL-9755511">
    <property type="pathway name" value="KEAP1-NFE2L2 pathway"/>
</dbReference>
<dbReference type="Reactome" id="R-CEL-9762114">
    <property type="pathway name" value="GSK3B and BTRC:CUL1-mediated-degradation of NFE2L2"/>
</dbReference>
<dbReference type="Reactome" id="R-CEL-983168">
    <property type="pathway name" value="Antigen processing: Ubiquitination &amp; Proteasome degradation"/>
</dbReference>
<dbReference type="Reactome" id="R-CEL-9907900">
    <property type="pathway name" value="Proteasome assembly"/>
</dbReference>
<dbReference type="PRO" id="PR:Q18787"/>
<dbReference type="Proteomes" id="UP000001940">
    <property type="component" value="Chromosome V"/>
</dbReference>
<dbReference type="Bgee" id="WBGene00004501">
    <property type="expression patterns" value="Expressed in germ line (C elegans) and 4 other cell types or tissues"/>
</dbReference>
<dbReference type="GO" id="GO:0005737">
    <property type="term" value="C:cytoplasm"/>
    <property type="evidence" value="ECO:0007669"/>
    <property type="project" value="UniProtKB-SubCell"/>
</dbReference>
<dbReference type="GO" id="GO:0005634">
    <property type="term" value="C:nucleus"/>
    <property type="evidence" value="ECO:0007669"/>
    <property type="project" value="UniProtKB-SubCell"/>
</dbReference>
<dbReference type="GO" id="GO:0000502">
    <property type="term" value="C:proteasome complex"/>
    <property type="evidence" value="ECO:0000250"/>
    <property type="project" value="UniProtKB"/>
</dbReference>
<dbReference type="GO" id="GO:0008540">
    <property type="term" value="C:proteasome regulatory particle, base subcomplex"/>
    <property type="evidence" value="ECO:0000318"/>
    <property type="project" value="GO_Central"/>
</dbReference>
<dbReference type="GO" id="GO:0005524">
    <property type="term" value="F:ATP binding"/>
    <property type="evidence" value="ECO:0007669"/>
    <property type="project" value="UniProtKB-KW"/>
</dbReference>
<dbReference type="GO" id="GO:0016887">
    <property type="term" value="F:ATP hydrolysis activity"/>
    <property type="evidence" value="ECO:0007669"/>
    <property type="project" value="InterPro"/>
</dbReference>
<dbReference type="GO" id="GO:0036402">
    <property type="term" value="F:proteasome-activating activity"/>
    <property type="evidence" value="ECO:0000250"/>
    <property type="project" value="UniProtKB"/>
</dbReference>
<dbReference type="GO" id="GO:0043161">
    <property type="term" value="P:proteasome-mediated ubiquitin-dependent protein catabolic process"/>
    <property type="evidence" value="ECO:0000318"/>
    <property type="project" value="GO_Central"/>
</dbReference>
<dbReference type="GO" id="GO:0006511">
    <property type="term" value="P:ubiquitin-dependent protein catabolic process"/>
    <property type="evidence" value="ECO:0000250"/>
    <property type="project" value="UniProtKB"/>
</dbReference>
<dbReference type="CDD" id="cd19502">
    <property type="entry name" value="RecA-like_PAN_like"/>
    <property type="match status" value="1"/>
</dbReference>
<dbReference type="FunFam" id="1.10.8.60:FF:000005">
    <property type="entry name" value="26S protease regulatory subunit 7"/>
    <property type="match status" value="1"/>
</dbReference>
<dbReference type="FunFam" id="2.40.50.140:FF:000075">
    <property type="entry name" value="26S protease regulatory subunit 7"/>
    <property type="match status" value="1"/>
</dbReference>
<dbReference type="FunFam" id="3.40.50.300:FF:000027">
    <property type="entry name" value="26S protease regulatory subunit 7"/>
    <property type="match status" value="1"/>
</dbReference>
<dbReference type="Gene3D" id="1.10.8.60">
    <property type="match status" value="1"/>
</dbReference>
<dbReference type="Gene3D" id="2.40.50.140">
    <property type="entry name" value="Nucleic acid-binding proteins"/>
    <property type="match status" value="1"/>
</dbReference>
<dbReference type="Gene3D" id="3.40.50.300">
    <property type="entry name" value="P-loop containing nucleotide triphosphate hydrolases"/>
    <property type="match status" value="1"/>
</dbReference>
<dbReference type="InterPro" id="IPR050221">
    <property type="entry name" value="26S_Proteasome_ATPase"/>
</dbReference>
<dbReference type="InterPro" id="IPR003593">
    <property type="entry name" value="AAA+_ATPase"/>
</dbReference>
<dbReference type="InterPro" id="IPR041569">
    <property type="entry name" value="AAA_lid_3"/>
</dbReference>
<dbReference type="InterPro" id="IPR003959">
    <property type="entry name" value="ATPase_AAA_core"/>
</dbReference>
<dbReference type="InterPro" id="IPR003960">
    <property type="entry name" value="ATPase_AAA_CS"/>
</dbReference>
<dbReference type="InterPro" id="IPR012340">
    <property type="entry name" value="NA-bd_OB-fold"/>
</dbReference>
<dbReference type="InterPro" id="IPR027417">
    <property type="entry name" value="P-loop_NTPase"/>
</dbReference>
<dbReference type="InterPro" id="IPR048723">
    <property type="entry name" value="PRS7-like_OB"/>
</dbReference>
<dbReference type="PANTHER" id="PTHR23073">
    <property type="entry name" value="26S PROTEASOME REGULATORY SUBUNIT"/>
    <property type="match status" value="1"/>
</dbReference>
<dbReference type="Pfam" id="PF00004">
    <property type="entry name" value="AAA"/>
    <property type="match status" value="1"/>
</dbReference>
<dbReference type="Pfam" id="PF17862">
    <property type="entry name" value="AAA_lid_3"/>
    <property type="match status" value="1"/>
</dbReference>
<dbReference type="Pfam" id="PF21236">
    <property type="entry name" value="PRS7_OB"/>
    <property type="match status" value="1"/>
</dbReference>
<dbReference type="SMART" id="SM00382">
    <property type="entry name" value="AAA"/>
    <property type="match status" value="1"/>
</dbReference>
<dbReference type="SUPFAM" id="SSF52540">
    <property type="entry name" value="P-loop containing nucleoside triphosphate hydrolases"/>
    <property type="match status" value="1"/>
</dbReference>
<dbReference type="PROSITE" id="PS00674">
    <property type="entry name" value="AAA"/>
    <property type="match status" value="1"/>
</dbReference>
<proteinExistence type="evidence at protein level"/>